<proteinExistence type="evidence at protein level"/>
<reference key="1">
    <citation type="journal article" date="2013" name="PLoS ONE">
        <title>Genomic analysis of Melioribacter roseus, facultatively anaerobic organotrophic bacterium representing a novel deep lineage within Bacteriodetes/Chlorobi group.</title>
        <authorList>
            <person name="Kadnikov V.V."/>
            <person name="Mardanov A.V."/>
            <person name="Podosokorskaya O.A."/>
            <person name="Gavrilov S.N."/>
            <person name="Kublanov I.V."/>
            <person name="Beletsky A.V."/>
            <person name="Bonch-Osmolovskaya E.A."/>
            <person name="Ravin N.V."/>
        </authorList>
    </citation>
    <scope>NUCLEOTIDE SEQUENCE [LARGE SCALE GENOMIC DNA]</scope>
    <source>
        <strain>JCM 17771 / P3M-2</strain>
    </source>
</reference>
<reference key="2">
    <citation type="journal article" date="2015" name="Appl. Microbiol. Biotechnol.">
        <title>Identification of sucrose synthase in nonphotosynthetic bacteria and characterization of the recombinant enzymes.</title>
        <authorList>
            <person name="Diricks M."/>
            <person name="De Bruyn F."/>
            <person name="Van Daele P."/>
            <person name="Walmagh M."/>
            <person name="Desmet T."/>
        </authorList>
    </citation>
    <scope>FUNCTION</scope>
    <scope>CATALYTIC ACTIVITY</scope>
    <scope>BIOPHYSICOCHEMICAL PROPERTIES</scope>
    <source>
        <strain>JCM 17771 / P3M-2</strain>
    </source>
</reference>
<accession>I7A3T6</accession>
<comment type="function">
    <text evidence="1 4">Catalyzes the reversible conversion of sucrose and a nucleotide disphosphate (NDP) into fructose and NDP-glucose; although the reaction is freely reversible in vitro, the physiological reaction seems to be sucrose cleavage. Unlike characterized plant enzymes prefers ADP as a cosubstrate, whereas plants prefer UDP (By similarity). Its preference for ADP over UDP suggests it may directly link sucrose and glycogen metabolism (Probable).</text>
</comment>
<comment type="catalytic activity">
    <reaction evidence="4">
        <text>an NDP-alpha-D-glucose + D-fructose = a ribonucleoside 5'-diphosphate + sucrose + H(+)</text>
        <dbReference type="Rhea" id="RHEA:16241"/>
        <dbReference type="ChEBI" id="CHEBI:15378"/>
        <dbReference type="ChEBI" id="CHEBI:17992"/>
        <dbReference type="ChEBI" id="CHEBI:37721"/>
        <dbReference type="ChEBI" id="CHEBI:57930"/>
        <dbReference type="ChEBI" id="CHEBI:76533"/>
        <dbReference type="EC" id="2.4.1.13"/>
    </reaction>
</comment>
<comment type="biophysicochemical properties">
    <phDependence>
        <text evidence="4">Optimum pH is 7.0.</text>
    </phDependence>
    <temperatureDependence>
        <text evidence="4">Optimum temperature is 80 degrees Celsius. Retains about 40% activity after 15 minutes at 65 degrees Celsius.</text>
    </temperatureDependence>
</comment>
<comment type="subunit">
    <text evidence="3">Homotetramer.</text>
</comment>
<comment type="similarity">
    <text evidence="6">Belongs to the glycosyltransferase 1 family.</text>
</comment>
<dbReference type="EC" id="2.4.1.13" evidence="4"/>
<dbReference type="EMBL" id="CP003557">
    <property type="protein sequence ID" value="AFN74551.1"/>
    <property type="molecule type" value="Genomic_DNA"/>
</dbReference>
<dbReference type="RefSeq" id="WP_014855986.1">
    <property type="nucleotide sequence ID" value="NC_018178.1"/>
</dbReference>
<dbReference type="SMR" id="I7A3T6"/>
<dbReference type="STRING" id="1191523.MROS_1314"/>
<dbReference type="KEGG" id="mro:MROS_1314"/>
<dbReference type="PATRIC" id="fig|1191523.3.peg.1400"/>
<dbReference type="eggNOG" id="COG0438">
    <property type="taxonomic scope" value="Bacteria"/>
</dbReference>
<dbReference type="HOGENOM" id="CLU_019158_1_0_10"/>
<dbReference type="OrthoDB" id="9801609at2"/>
<dbReference type="BRENDA" id="2.4.1.13">
    <property type="organism ID" value="14463"/>
</dbReference>
<dbReference type="Proteomes" id="UP000009011">
    <property type="component" value="Chromosome"/>
</dbReference>
<dbReference type="GO" id="GO:0016157">
    <property type="term" value="F:sucrose synthase activity"/>
    <property type="evidence" value="ECO:0007669"/>
    <property type="project" value="UniProtKB-EC"/>
</dbReference>
<dbReference type="GO" id="GO:0005985">
    <property type="term" value="P:sucrose metabolic process"/>
    <property type="evidence" value="ECO:0007669"/>
    <property type="project" value="InterPro"/>
</dbReference>
<dbReference type="Gene3D" id="1.20.120.1230">
    <property type="match status" value="1"/>
</dbReference>
<dbReference type="Gene3D" id="3.10.450.330">
    <property type="match status" value="1"/>
</dbReference>
<dbReference type="Gene3D" id="3.40.50.2000">
    <property type="entry name" value="Glycogen Phosphorylase B"/>
    <property type="match status" value="2"/>
</dbReference>
<dbReference type="InterPro" id="IPR001296">
    <property type="entry name" value="Glyco_trans_1"/>
</dbReference>
<dbReference type="InterPro" id="IPR000368">
    <property type="entry name" value="Sucrose_synth_GT-B1"/>
</dbReference>
<dbReference type="InterPro" id="IPR012820">
    <property type="entry name" value="Sucrose_synthase_pln/cyn"/>
</dbReference>
<dbReference type="InterPro" id="IPR056736">
    <property type="entry name" value="SUS_EPBD"/>
</dbReference>
<dbReference type="InterPro" id="IPR056735">
    <property type="entry name" value="SUS_N"/>
</dbReference>
<dbReference type="NCBIfam" id="TIGR02470">
    <property type="entry name" value="sucr_synth"/>
    <property type="match status" value="1"/>
</dbReference>
<dbReference type="PANTHER" id="PTHR45839">
    <property type="match status" value="1"/>
</dbReference>
<dbReference type="PANTHER" id="PTHR45839:SF7">
    <property type="entry name" value="SUCROSE SYNTHASE 1"/>
    <property type="match status" value="1"/>
</dbReference>
<dbReference type="Pfam" id="PF00534">
    <property type="entry name" value="Glycos_transf_1"/>
    <property type="match status" value="1"/>
</dbReference>
<dbReference type="Pfam" id="PF00862">
    <property type="entry name" value="GT-B_Sucrose_synth"/>
    <property type="match status" value="1"/>
</dbReference>
<dbReference type="Pfam" id="PF24862">
    <property type="entry name" value="SUS_EPBD"/>
    <property type="match status" value="1"/>
</dbReference>
<dbReference type="Pfam" id="PF24861">
    <property type="entry name" value="SUS_N"/>
    <property type="match status" value="1"/>
</dbReference>
<dbReference type="SUPFAM" id="SSF53756">
    <property type="entry name" value="UDP-Glycosyltransferase/glycogen phosphorylase"/>
    <property type="match status" value="1"/>
</dbReference>
<feature type="chain" id="PRO_0000442257" description="Sucrose synthase">
    <location>
        <begin position="1"/>
        <end position="793"/>
    </location>
</feature>
<feature type="region of interest" description="GT-B glycosyltransferase" evidence="2">
    <location>
        <begin position="259"/>
        <end position="738"/>
    </location>
</feature>
<organism>
    <name type="scientific">Melioribacter roseus (strain JCM 17771 / P3M-2)</name>
    <dbReference type="NCBI Taxonomy" id="1191523"/>
    <lineage>
        <taxon>Bacteria</taxon>
        <taxon>Pseudomonadati</taxon>
        <taxon>Ignavibacteriota</taxon>
        <taxon>Ignavibacteria</taxon>
        <taxon>Ignavibacteriales</taxon>
        <taxon>Melioribacteraceae</taxon>
        <taxon>Melioribacter</taxon>
    </lineage>
</organism>
<evidence type="ECO:0000250" key="1">
    <source>
        <dbReference type="UniProtKB" id="A0A059ZV61"/>
    </source>
</evidence>
<evidence type="ECO:0000250" key="2">
    <source>
        <dbReference type="UniProtKB" id="P49040"/>
    </source>
</evidence>
<evidence type="ECO:0000250" key="3">
    <source>
        <dbReference type="UniProtKB" id="Q820M5"/>
    </source>
</evidence>
<evidence type="ECO:0000269" key="4">
    <source>
    </source>
</evidence>
<evidence type="ECO:0000303" key="5">
    <source>
    </source>
</evidence>
<evidence type="ECO:0000305" key="6"/>
<gene>
    <name type="ordered locus">MROS_1314</name>
</gene>
<keyword id="KW-0328">Glycosyltransferase</keyword>
<keyword id="KW-1185">Reference proteome</keyword>
<keyword id="KW-0808">Transferase</keyword>
<protein>
    <recommendedName>
        <fullName>Sucrose synthase</fullName>
        <shortName evidence="5">SuSyMr</shortName>
        <ecNumber evidence="4">2.4.1.13</ecNumber>
    </recommendedName>
</protein>
<name>SUS_MELRP</name>
<sequence length="793" mass="91768">MIKDIYKTAETFHNDFYDFLKAVSTQPKKLMITGELINLYVASGYDKNSGLYEFIEKIQETISLDHSVILDVRIKIASIKFYRISLEEFLIEEISSKEFLIYKETVAKPDTLNTTLNLNFKPFYDKSPAVRDIKYIGSGVEYLNRFLSSQMFTNEERWKKNLFDFIRLHNFNGEQLILNDRIKDTKHLNNQINAALAKLGNHPANTPYENIKHILQELGFEKGLGKDAGTITHNLNLLDQLLNSPDHNALAEFISSIPMILNIAIISPHGFFGQEGVLGLPDTGGQVVYILDQVKALEKQLIDSLKKSGLNLLPKIIVLTRLIPNARGTTCNQRLEKIYGAKNSWILRVPFREYNKRVTDEWISRFEIWPYLEDFAEDSYTALLAEFKKRPDLIIGNYSDGNLVAYLLAKKFKVTQCGIAHALEKSKYLYSALYWYDLEKYYHFSMQFTADLLAINSADFLITSSFQEIAGTEKSIGQYESYMHFTMPGLYRVENGVNPFHVKFNIVSPGVNEKIYFPYPKTKWRLKETKRRIENLFFSNSEDPDVIGWLDNPEKTPIFTMSRLDRIKNISFLVRCFGESEELQQTSNLIVVAGKIDETMTDDYEEKEQIRLMHELITKYKLHNKIRWIGKLLPKDESGEAYRIIAERRGIFVQPALFEGFGLTVLEAMTSGLPVFATKYGGPLEIIQNGVNGFHIDPVNQEETTEKIVRFLSDSYIDSSVWDKLSKAAIKRVTEKYSWKLYSKRLLSLAKLYGFWKYATNLEHEDINAYLDLIYHTIYKSRAKILLEEHMKR</sequence>